<keyword id="KW-0143">Chaperone</keyword>
<keyword id="KW-0963">Cytoplasm</keyword>
<keyword id="KW-0533">Nickel</keyword>
<keyword id="KW-0996">Nickel insertion</keyword>
<sequence>MIVEEIQGNIANLSNSEKQKHVEKVYLENSDLVKRIQRVVTDHGTEIGIRLKQPIDLQYGDILYADDHNMIIVDVNSEDLLVIQPRTLQEMGDIAHQLGNRHLPAQFTETEMLVQYDYLVEDLLKSLGIPYVREDRKVNKAFRHIGHSHD</sequence>
<comment type="function">
    <text evidence="1">Involved in urease metallocenter assembly. Binds nickel. Probably functions as a nickel donor during metallocenter assembly.</text>
</comment>
<comment type="subcellular location">
    <subcellularLocation>
        <location evidence="1">Cytoplasm</location>
    </subcellularLocation>
</comment>
<comment type="similarity">
    <text evidence="1">Belongs to the UreE family.</text>
</comment>
<evidence type="ECO:0000255" key="1">
    <source>
        <dbReference type="HAMAP-Rule" id="MF_00822"/>
    </source>
</evidence>
<reference key="1">
    <citation type="journal article" date="2008" name="J. Bacteriol.">
        <title>Genome sequence of Staphylococcus aureus strain Newman and comparative analysis of staphylococcal genomes: polymorphism and evolution of two major pathogenicity islands.</title>
        <authorList>
            <person name="Baba T."/>
            <person name="Bae T."/>
            <person name="Schneewind O."/>
            <person name="Takeuchi F."/>
            <person name="Hiramatsu K."/>
        </authorList>
    </citation>
    <scope>NUCLEOTIDE SEQUENCE [LARGE SCALE GENOMIC DNA]</scope>
    <source>
        <strain>Newman</strain>
    </source>
</reference>
<feature type="chain" id="PRO_1000072876" description="Urease accessory protein UreE">
    <location>
        <begin position="1"/>
        <end position="150"/>
    </location>
</feature>
<proteinExistence type="inferred from homology"/>
<dbReference type="EMBL" id="AP009351">
    <property type="protein sequence ID" value="BAF68463.1"/>
    <property type="molecule type" value="Genomic_DNA"/>
</dbReference>
<dbReference type="RefSeq" id="WP_000634589.1">
    <property type="nucleotide sequence ID" value="NZ_JBBIAE010000006.1"/>
</dbReference>
<dbReference type="SMR" id="A6QJD1"/>
<dbReference type="KEGG" id="sae:NWMN_2191"/>
<dbReference type="HOGENOM" id="CLU_093757_3_1_9"/>
<dbReference type="Proteomes" id="UP000006386">
    <property type="component" value="Chromosome"/>
</dbReference>
<dbReference type="GO" id="GO:0005737">
    <property type="term" value="C:cytoplasm"/>
    <property type="evidence" value="ECO:0007669"/>
    <property type="project" value="UniProtKB-SubCell"/>
</dbReference>
<dbReference type="GO" id="GO:0016151">
    <property type="term" value="F:nickel cation binding"/>
    <property type="evidence" value="ECO:0007669"/>
    <property type="project" value="UniProtKB-UniRule"/>
</dbReference>
<dbReference type="GO" id="GO:0051082">
    <property type="term" value="F:unfolded protein binding"/>
    <property type="evidence" value="ECO:0007669"/>
    <property type="project" value="UniProtKB-UniRule"/>
</dbReference>
<dbReference type="GO" id="GO:0006457">
    <property type="term" value="P:protein folding"/>
    <property type="evidence" value="ECO:0007669"/>
    <property type="project" value="InterPro"/>
</dbReference>
<dbReference type="GO" id="GO:0065003">
    <property type="term" value="P:protein-containing complex assembly"/>
    <property type="evidence" value="ECO:0007669"/>
    <property type="project" value="InterPro"/>
</dbReference>
<dbReference type="GO" id="GO:0019627">
    <property type="term" value="P:urea metabolic process"/>
    <property type="evidence" value="ECO:0007669"/>
    <property type="project" value="InterPro"/>
</dbReference>
<dbReference type="CDD" id="cd00571">
    <property type="entry name" value="UreE"/>
    <property type="match status" value="1"/>
</dbReference>
<dbReference type="Gene3D" id="2.60.260.20">
    <property type="entry name" value="Urease metallochaperone UreE, N-terminal domain"/>
    <property type="match status" value="1"/>
</dbReference>
<dbReference type="Gene3D" id="3.30.70.790">
    <property type="entry name" value="UreE, C-terminal domain"/>
    <property type="match status" value="1"/>
</dbReference>
<dbReference type="HAMAP" id="MF_00822">
    <property type="entry name" value="UreE"/>
    <property type="match status" value="1"/>
</dbReference>
<dbReference type="InterPro" id="IPR012406">
    <property type="entry name" value="UreE"/>
</dbReference>
<dbReference type="InterPro" id="IPR007864">
    <property type="entry name" value="UreE_C_dom"/>
</dbReference>
<dbReference type="InterPro" id="IPR004029">
    <property type="entry name" value="UreE_N"/>
</dbReference>
<dbReference type="InterPro" id="IPR036118">
    <property type="entry name" value="UreE_N_sf"/>
</dbReference>
<dbReference type="NCBIfam" id="NF009755">
    <property type="entry name" value="PRK13261.2-1"/>
    <property type="match status" value="1"/>
</dbReference>
<dbReference type="Pfam" id="PF05194">
    <property type="entry name" value="UreE_C"/>
    <property type="match status" value="1"/>
</dbReference>
<dbReference type="Pfam" id="PF02814">
    <property type="entry name" value="UreE_N"/>
    <property type="match status" value="1"/>
</dbReference>
<dbReference type="PIRSF" id="PIRSF036402">
    <property type="entry name" value="Ureas_acces_UreE"/>
    <property type="match status" value="1"/>
</dbReference>
<dbReference type="SMART" id="SM00988">
    <property type="entry name" value="UreE_N"/>
    <property type="match status" value="1"/>
</dbReference>
<dbReference type="SUPFAM" id="SSF69737">
    <property type="entry name" value="Urease metallochaperone UreE, C-terminal domain"/>
    <property type="match status" value="1"/>
</dbReference>
<dbReference type="SUPFAM" id="SSF69287">
    <property type="entry name" value="Urease metallochaperone UreE, N-terminal domain"/>
    <property type="match status" value="1"/>
</dbReference>
<name>UREE_STAAE</name>
<gene>
    <name evidence="1" type="primary">ureE</name>
    <name type="ordered locus">NWMN_2191</name>
</gene>
<protein>
    <recommendedName>
        <fullName evidence="1">Urease accessory protein UreE</fullName>
    </recommendedName>
</protein>
<organism>
    <name type="scientific">Staphylococcus aureus (strain Newman)</name>
    <dbReference type="NCBI Taxonomy" id="426430"/>
    <lineage>
        <taxon>Bacteria</taxon>
        <taxon>Bacillati</taxon>
        <taxon>Bacillota</taxon>
        <taxon>Bacilli</taxon>
        <taxon>Bacillales</taxon>
        <taxon>Staphylococcaceae</taxon>
        <taxon>Staphylococcus</taxon>
    </lineage>
</organism>
<accession>A6QJD1</accession>